<comment type="alternative products">
    <event type="alternative splicing"/>
    <isoform>
        <id>Q8N6V4-1</id>
        <name>1</name>
        <sequence type="displayed"/>
    </isoform>
    <isoform>
        <id>Q8N6V4-2</id>
        <name>2</name>
        <sequence type="described" ref="VSP_036509"/>
    </isoform>
    <isoform>
        <id>Q8N6V4-3</id>
        <name>3</name>
        <sequence type="described" ref="VSP_036867"/>
    </isoform>
    <isoform>
        <id>Q8N6V4-4</id>
        <name>4</name>
        <sequence type="described" ref="VSP_046396"/>
    </isoform>
</comment>
<comment type="similarity">
    <text evidence="3">Belongs to the UPF0728 family.</text>
</comment>
<gene>
    <name type="primary">C10orf53</name>
</gene>
<keyword id="KW-0025">Alternative splicing</keyword>
<keyword id="KW-1267">Proteomics identification</keyword>
<keyword id="KW-1185">Reference proteome</keyword>
<protein>
    <recommendedName>
        <fullName>UPF0728 protein C10orf53</fullName>
    </recommendedName>
</protein>
<organism>
    <name type="scientific">Homo sapiens</name>
    <name type="common">Human</name>
    <dbReference type="NCBI Taxonomy" id="9606"/>
    <lineage>
        <taxon>Eukaryota</taxon>
        <taxon>Metazoa</taxon>
        <taxon>Chordata</taxon>
        <taxon>Craniata</taxon>
        <taxon>Vertebrata</taxon>
        <taxon>Euteleostomi</taxon>
        <taxon>Mammalia</taxon>
        <taxon>Eutheria</taxon>
        <taxon>Euarchontoglires</taxon>
        <taxon>Primates</taxon>
        <taxon>Haplorrhini</taxon>
        <taxon>Catarrhini</taxon>
        <taxon>Hominidae</taxon>
        <taxon>Homo</taxon>
    </lineage>
</organism>
<sequence>MPKNAVVILRYGPYSAAGLPVEHHTFRLQGLQAVLAIDGHEVILEKIEDWNVVELMVNEEVIFHCNIKDLEFGGDGKLDPLCEKARIAVLNAY</sequence>
<proteinExistence type="evidence at protein level"/>
<evidence type="ECO:0000303" key="1">
    <source>
    </source>
</evidence>
<evidence type="ECO:0000303" key="2">
    <source>
    </source>
</evidence>
<evidence type="ECO:0000305" key="3"/>
<name>CJ053_HUMAN</name>
<accession>Q8N6V4</accession>
<accession>A6NI81</accession>
<accession>A6NLE0</accession>
<accession>B9ZVK6</accession>
<dbReference type="EMBL" id="AK091773">
    <property type="status" value="NOT_ANNOTATED_CDS"/>
    <property type="molecule type" value="mRNA"/>
</dbReference>
<dbReference type="EMBL" id="AC069546">
    <property type="status" value="NOT_ANNOTATED_CDS"/>
    <property type="molecule type" value="Genomic_DNA"/>
</dbReference>
<dbReference type="EMBL" id="AC073366">
    <property type="status" value="NOT_ANNOTATED_CDS"/>
    <property type="molecule type" value="Genomic_DNA"/>
</dbReference>
<dbReference type="EMBL" id="CH471187">
    <property type="protein sequence ID" value="EAW93083.1"/>
    <property type="molecule type" value="Genomic_DNA"/>
</dbReference>
<dbReference type="EMBL" id="CH471187">
    <property type="protein sequence ID" value="EAW93085.1"/>
    <property type="molecule type" value="Genomic_DNA"/>
</dbReference>
<dbReference type="EMBL" id="BC028127">
    <property type="status" value="NOT_ANNOTATED_CDS"/>
    <property type="molecule type" value="mRNA"/>
</dbReference>
<dbReference type="EMBL" id="BI825648">
    <property type="status" value="NOT_ANNOTATED_CDS"/>
    <property type="molecule type" value="mRNA"/>
</dbReference>
<dbReference type="CCDS" id="CCDS31202.1">
    <molecule id="Q8N6V4-4"/>
</dbReference>
<dbReference type="CCDS" id="CCDS41521.1">
    <molecule id="Q8N6V4-1"/>
</dbReference>
<dbReference type="RefSeq" id="NP_001035892.1">
    <molecule id="Q8N6V4-1"/>
    <property type="nucleotide sequence ID" value="NM_001042427.3"/>
</dbReference>
<dbReference type="RefSeq" id="NP_872360.2">
    <molecule id="Q8N6V4-4"/>
    <property type="nucleotide sequence ID" value="NM_182554.4"/>
</dbReference>
<dbReference type="BioGRID" id="129425">
    <property type="interactions" value="16"/>
</dbReference>
<dbReference type="FunCoup" id="Q8N6V4">
    <property type="interactions" value="5"/>
</dbReference>
<dbReference type="IntAct" id="Q8N6V4">
    <property type="interactions" value="12"/>
</dbReference>
<dbReference type="STRING" id="9606.ENSP00000363226"/>
<dbReference type="iPTMnet" id="Q8N6V4"/>
<dbReference type="BioMuta" id="C10orf53"/>
<dbReference type="DMDM" id="224471890"/>
<dbReference type="MassIVE" id="Q8N6V4"/>
<dbReference type="PaxDb" id="9606-ENSP00000363226"/>
<dbReference type="PeptideAtlas" id="Q8N6V4"/>
<dbReference type="ProteomicsDB" id="72239">
    <molecule id="Q8N6V4-1"/>
</dbReference>
<dbReference type="ProteomicsDB" id="72240">
    <molecule id="Q8N6V4-2"/>
</dbReference>
<dbReference type="ProteomicsDB" id="72241">
    <molecule id="Q8N6V4-3"/>
</dbReference>
<dbReference type="ProteomicsDB" id="7546"/>
<dbReference type="Antibodypedia" id="50326">
    <property type="antibodies" value="32 antibodies from 9 providers"/>
</dbReference>
<dbReference type="DNASU" id="282966"/>
<dbReference type="Ensembl" id="ENST00000374111.8">
    <molecule id="Q8N6V4-1"/>
    <property type="protein sequence ID" value="ENSP00000363225.3"/>
    <property type="gene ID" value="ENSG00000178645.14"/>
</dbReference>
<dbReference type="Ensembl" id="ENST00000374112.7">
    <molecule id="Q8N6V4-4"/>
    <property type="protein sequence ID" value="ENSP00000363226.3"/>
    <property type="gene ID" value="ENSG00000178645.14"/>
</dbReference>
<dbReference type="Ensembl" id="ENST00000374113.3">
    <molecule id="Q8N6V4-2"/>
    <property type="protein sequence ID" value="ENSP00000363227.3"/>
    <property type="gene ID" value="ENSG00000178645.14"/>
</dbReference>
<dbReference type="GeneID" id="282966"/>
<dbReference type="KEGG" id="hsa:282966"/>
<dbReference type="MANE-Select" id="ENST00000374111.8">
    <property type="protein sequence ID" value="ENSP00000363225.3"/>
    <property type="RefSeq nucleotide sequence ID" value="NM_001042427.3"/>
    <property type="RefSeq protein sequence ID" value="NP_001035892.1"/>
</dbReference>
<dbReference type="UCSC" id="uc001jib.4">
    <molecule id="Q8N6V4-1"/>
    <property type="organism name" value="human"/>
</dbReference>
<dbReference type="AGR" id="HGNC:27421"/>
<dbReference type="CTD" id="282966"/>
<dbReference type="DisGeNET" id="282966"/>
<dbReference type="GeneCards" id="C10orf53"/>
<dbReference type="HGNC" id="HGNC:27421">
    <property type="gene designation" value="C10orf53"/>
</dbReference>
<dbReference type="HPA" id="ENSG00000178645">
    <property type="expression patterns" value="Tissue enriched (testis)"/>
</dbReference>
<dbReference type="neXtProt" id="NX_Q8N6V4"/>
<dbReference type="OpenTargets" id="ENSG00000178645"/>
<dbReference type="PharmGKB" id="PA134895627"/>
<dbReference type="VEuPathDB" id="HostDB:ENSG00000178645"/>
<dbReference type="GeneTree" id="ENSGT00390000002871"/>
<dbReference type="HOGENOM" id="CLU_189555_0_0_1"/>
<dbReference type="InParanoid" id="Q8N6V4"/>
<dbReference type="OMA" id="VEHRTYR"/>
<dbReference type="OrthoDB" id="10003460at2759"/>
<dbReference type="PAN-GO" id="Q8N6V4">
    <property type="GO annotations" value="0 GO annotations based on evolutionary models"/>
</dbReference>
<dbReference type="PhylomeDB" id="Q8N6V4"/>
<dbReference type="TreeFam" id="TF329673"/>
<dbReference type="PathwayCommons" id="Q8N6V4"/>
<dbReference type="BioGRID-ORCS" id="282966">
    <property type="hits" value="16 hits in 1125 CRISPR screens"/>
</dbReference>
<dbReference type="ChiTaRS" id="C10orf53">
    <property type="organism name" value="human"/>
</dbReference>
<dbReference type="GenomeRNAi" id="282966"/>
<dbReference type="Pharos" id="Q8N6V4">
    <property type="development level" value="Tdark"/>
</dbReference>
<dbReference type="PRO" id="PR:Q8N6V4"/>
<dbReference type="Proteomes" id="UP000005640">
    <property type="component" value="Chromosome 10"/>
</dbReference>
<dbReference type="RNAct" id="Q8N6V4">
    <property type="molecule type" value="protein"/>
</dbReference>
<dbReference type="Bgee" id="ENSG00000178645">
    <property type="expression patterns" value="Expressed in sperm and 31 other cell types or tissues"/>
</dbReference>
<dbReference type="InterPro" id="IPR027885">
    <property type="entry name" value="UPF0728"/>
</dbReference>
<dbReference type="PANTHER" id="PTHR28448">
    <property type="entry name" value="UPF0728 PROTEIN C10ORF53"/>
    <property type="match status" value="1"/>
</dbReference>
<dbReference type="PANTHER" id="PTHR28448:SF1">
    <property type="entry name" value="UPF0728 PROTEIN C10ORF53"/>
    <property type="match status" value="1"/>
</dbReference>
<dbReference type="Pfam" id="PF15092">
    <property type="entry name" value="UPF0728"/>
    <property type="match status" value="1"/>
</dbReference>
<reference key="1">
    <citation type="journal article" date="2004" name="Nat. Genet.">
        <title>Complete sequencing and characterization of 21,243 full-length human cDNAs.</title>
        <authorList>
            <person name="Ota T."/>
            <person name="Suzuki Y."/>
            <person name="Nishikawa T."/>
            <person name="Otsuki T."/>
            <person name="Sugiyama T."/>
            <person name="Irie R."/>
            <person name="Wakamatsu A."/>
            <person name="Hayashi K."/>
            <person name="Sato H."/>
            <person name="Nagai K."/>
            <person name="Kimura K."/>
            <person name="Makita H."/>
            <person name="Sekine M."/>
            <person name="Obayashi M."/>
            <person name="Nishi T."/>
            <person name="Shibahara T."/>
            <person name="Tanaka T."/>
            <person name="Ishii S."/>
            <person name="Yamamoto J."/>
            <person name="Saito K."/>
            <person name="Kawai Y."/>
            <person name="Isono Y."/>
            <person name="Nakamura Y."/>
            <person name="Nagahari K."/>
            <person name="Murakami K."/>
            <person name="Yasuda T."/>
            <person name="Iwayanagi T."/>
            <person name="Wagatsuma M."/>
            <person name="Shiratori A."/>
            <person name="Sudo H."/>
            <person name="Hosoiri T."/>
            <person name="Kaku Y."/>
            <person name="Kodaira H."/>
            <person name="Kondo H."/>
            <person name="Sugawara M."/>
            <person name="Takahashi M."/>
            <person name="Kanda K."/>
            <person name="Yokoi T."/>
            <person name="Furuya T."/>
            <person name="Kikkawa E."/>
            <person name="Omura Y."/>
            <person name="Abe K."/>
            <person name="Kamihara K."/>
            <person name="Katsuta N."/>
            <person name="Sato K."/>
            <person name="Tanikawa M."/>
            <person name="Yamazaki M."/>
            <person name="Ninomiya K."/>
            <person name="Ishibashi T."/>
            <person name="Yamashita H."/>
            <person name="Murakawa K."/>
            <person name="Fujimori K."/>
            <person name="Tanai H."/>
            <person name="Kimata M."/>
            <person name="Watanabe M."/>
            <person name="Hiraoka S."/>
            <person name="Chiba Y."/>
            <person name="Ishida S."/>
            <person name="Ono Y."/>
            <person name="Takiguchi S."/>
            <person name="Watanabe S."/>
            <person name="Yosida M."/>
            <person name="Hotuta T."/>
            <person name="Kusano J."/>
            <person name="Kanehori K."/>
            <person name="Takahashi-Fujii A."/>
            <person name="Hara H."/>
            <person name="Tanase T.-O."/>
            <person name="Nomura Y."/>
            <person name="Togiya S."/>
            <person name="Komai F."/>
            <person name="Hara R."/>
            <person name="Takeuchi K."/>
            <person name="Arita M."/>
            <person name="Imose N."/>
            <person name="Musashino K."/>
            <person name="Yuuki H."/>
            <person name="Oshima A."/>
            <person name="Sasaki N."/>
            <person name="Aotsuka S."/>
            <person name="Yoshikawa Y."/>
            <person name="Matsunawa H."/>
            <person name="Ichihara T."/>
            <person name="Shiohata N."/>
            <person name="Sano S."/>
            <person name="Moriya S."/>
            <person name="Momiyama H."/>
            <person name="Satoh N."/>
            <person name="Takami S."/>
            <person name="Terashima Y."/>
            <person name="Suzuki O."/>
            <person name="Nakagawa S."/>
            <person name="Senoh A."/>
            <person name="Mizoguchi H."/>
            <person name="Goto Y."/>
            <person name="Shimizu F."/>
            <person name="Wakebe H."/>
            <person name="Hishigaki H."/>
            <person name="Watanabe T."/>
            <person name="Sugiyama A."/>
            <person name="Takemoto M."/>
            <person name="Kawakami B."/>
            <person name="Yamazaki M."/>
            <person name="Watanabe K."/>
            <person name="Kumagai A."/>
            <person name="Itakura S."/>
            <person name="Fukuzumi Y."/>
            <person name="Fujimori Y."/>
            <person name="Komiyama M."/>
            <person name="Tashiro H."/>
            <person name="Tanigami A."/>
            <person name="Fujiwara T."/>
            <person name="Ono T."/>
            <person name="Yamada K."/>
            <person name="Fujii Y."/>
            <person name="Ozaki K."/>
            <person name="Hirao M."/>
            <person name="Ohmori Y."/>
            <person name="Kawabata A."/>
            <person name="Hikiji T."/>
            <person name="Kobatake N."/>
            <person name="Inagaki H."/>
            <person name="Ikema Y."/>
            <person name="Okamoto S."/>
            <person name="Okitani R."/>
            <person name="Kawakami T."/>
            <person name="Noguchi S."/>
            <person name="Itoh T."/>
            <person name="Shigeta K."/>
            <person name="Senba T."/>
            <person name="Matsumura K."/>
            <person name="Nakajima Y."/>
            <person name="Mizuno T."/>
            <person name="Morinaga M."/>
            <person name="Sasaki M."/>
            <person name="Togashi T."/>
            <person name="Oyama M."/>
            <person name="Hata H."/>
            <person name="Watanabe M."/>
            <person name="Komatsu T."/>
            <person name="Mizushima-Sugano J."/>
            <person name="Satoh T."/>
            <person name="Shirai Y."/>
            <person name="Takahashi Y."/>
            <person name="Nakagawa K."/>
            <person name="Okumura K."/>
            <person name="Nagase T."/>
            <person name="Nomura N."/>
            <person name="Kikuchi H."/>
            <person name="Masuho Y."/>
            <person name="Yamashita R."/>
            <person name="Nakai K."/>
            <person name="Yada T."/>
            <person name="Nakamura Y."/>
            <person name="Ohara O."/>
            <person name="Isogai T."/>
            <person name="Sugano S."/>
        </authorList>
    </citation>
    <scope>NUCLEOTIDE SEQUENCE [LARGE SCALE MRNA] (ISOFORM 2)</scope>
    <source>
        <tissue>Lung</tissue>
    </source>
</reference>
<reference key="2">
    <citation type="journal article" date="2004" name="Nature">
        <title>The DNA sequence and comparative analysis of human chromosome 10.</title>
        <authorList>
            <person name="Deloukas P."/>
            <person name="Earthrowl M.E."/>
            <person name="Grafham D.V."/>
            <person name="Rubenfield M."/>
            <person name="French L."/>
            <person name="Steward C.A."/>
            <person name="Sims S.K."/>
            <person name="Jones M.C."/>
            <person name="Searle S."/>
            <person name="Scott C."/>
            <person name="Howe K."/>
            <person name="Hunt S.E."/>
            <person name="Andrews T.D."/>
            <person name="Gilbert J.G.R."/>
            <person name="Swarbreck D."/>
            <person name="Ashurst J.L."/>
            <person name="Taylor A."/>
            <person name="Battles J."/>
            <person name="Bird C.P."/>
            <person name="Ainscough R."/>
            <person name="Almeida J.P."/>
            <person name="Ashwell R.I.S."/>
            <person name="Ambrose K.D."/>
            <person name="Babbage A.K."/>
            <person name="Bagguley C.L."/>
            <person name="Bailey J."/>
            <person name="Banerjee R."/>
            <person name="Bates K."/>
            <person name="Beasley H."/>
            <person name="Bray-Allen S."/>
            <person name="Brown A.J."/>
            <person name="Brown J.Y."/>
            <person name="Burford D.C."/>
            <person name="Burrill W."/>
            <person name="Burton J."/>
            <person name="Cahill P."/>
            <person name="Camire D."/>
            <person name="Carter N.P."/>
            <person name="Chapman J.C."/>
            <person name="Clark S.Y."/>
            <person name="Clarke G."/>
            <person name="Clee C.M."/>
            <person name="Clegg S."/>
            <person name="Corby N."/>
            <person name="Coulson A."/>
            <person name="Dhami P."/>
            <person name="Dutta I."/>
            <person name="Dunn M."/>
            <person name="Faulkner L."/>
            <person name="Frankish A."/>
            <person name="Frankland J.A."/>
            <person name="Garner P."/>
            <person name="Garnett J."/>
            <person name="Gribble S."/>
            <person name="Griffiths C."/>
            <person name="Grocock R."/>
            <person name="Gustafson E."/>
            <person name="Hammond S."/>
            <person name="Harley J.L."/>
            <person name="Hart E."/>
            <person name="Heath P.D."/>
            <person name="Ho T.P."/>
            <person name="Hopkins B."/>
            <person name="Horne J."/>
            <person name="Howden P.J."/>
            <person name="Huckle E."/>
            <person name="Hynds C."/>
            <person name="Johnson C."/>
            <person name="Johnson D."/>
            <person name="Kana A."/>
            <person name="Kay M."/>
            <person name="Kimberley A.M."/>
            <person name="Kershaw J.K."/>
            <person name="Kokkinaki M."/>
            <person name="Laird G.K."/>
            <person name="Lawlor S."/>
            <person name="Lee H.M."/>
            <person name="Leongamornlert D.A."/>
            <person name="Laird G."/>
            <person name="Lloyd C."/>
            <person name="Lloyd D.M."/>
            <person name="Loveland J."/>
            <person name="Lovell J."/>
            <person name="McLaren S."/>
            <person name="McLay K.E."/>
            <person name="McMurray A."/>
            <person name="Mashreghi-Mohammadi M."/>
            <person name="Matthews L."/>
            <person name="Milne S."/>
            <person name="Nickerson T."/>
            <person name="Nguyen M."/>
            <person name="Overton-Larty E."/>
            <person name="Palmer S.A."/>
            <person name="Pearce A.V."/>
            <person name="Peck A.I."/>
            <person name="Pelan S."/>
            <person name="Phillimore B."/>
            <person name="Porter K."/>
            <person name="Rice C.M."/>
            <person name="Rogosin A."/>
            <person name="Ross M.T."/>
            <person name="Sarafidou T."/>
            <person name="Sehra H.K."/>
            <person name="Shownkeen R."/>
            <person name="Skuce C.D."/>
            <person name="Smith M."/>
            <person name="Standring L."/>
            <person name="Sycamore N."/>
            <person name="Tester J."/>
            <person name="Thorpe A."/>
            <person name="Torcasso W."/>
            <person name="Tracey A."/>
            <person name="Tromans A."/>
            <person name="Tsolas J."/>
            <person name="Wall M."/>
            <person name="Walsh J."/>
            <person name="Wang H."/>
            <person name="Weinstock K."/>
            <person name="West A.P."/>
            <person name="Willey D.L."/>
            <person name="Whitehead S.L."/>
            <person name="Wilming L."/>
            <person name="Wray P.W."/>
            <person name="Young L."/>
            <person name="Chen Y."/>
            <person name="Lovering R.C."/>
            <person name="Moschonas N.K."/>
            <person name="Siebert R."/>
            <person name="Fechtel K."/>
            <person name="Bentley D."/>
            <person name="Durbin R.M."/>
            <person name="Hubbard T."/>
            <person name="Doucette-Stamm L."/>
            <person name="Beck S."/>
            <person name="Smith D.R."/>
            <person name="Rogers J."/>
        </authorList>
    </citation>
    <scope>NUCLEOTIDE SEQUENCE [LARGE SCALE GENOMIC DNA]</scope>
</reference>
<reference key="3">
    <citation type="submission" date="2005-09" db="EMBL/GenBank/DDBJ databases">
        <authorList>
            <person name="Mural R.J."/>
            <person name="Istrail S."/>
            <person name="Sutton G.G."/>
            <person name="Florea L."/>
            <person name="Halpern A.L."/>
            <person name="Mobarry C.M."/>
            <person name="Lippert R."/>
            <person name="Walenz B."/>
            <person name="Shatkay H."/>
            <person name="Dew I."/>
            <person name="Miller J.R."/>
            <person name="Flanigan M.J."/>
            <person name="Edwards N.J."/>
            <person name="Bolanos R."/>
            <person name="Fasulo D."/>
            <person name="Halldorsson B.V."/>
            <person name="Hannenhalli S."/>
            <person name="Turner R."/>
            <person name="Yooseph S."/>
            <person name="Lu F."/>
            <person name="Nusskern D.R."/>
            <person name="Shue B.C."/>
            <person name="Zheng X.H."/>
            <person name="Zhong F."/>
            <person name="Delcher A.L."/>
            <person name="Huson D.H."/>
            <person name="Kravitz S.A."/>
            <person name="Mouchard L."/>
            <person name="Reinert K."/>
            <person name="Remington K.A."/>
            <person name="Clark A.G."/>
            <person name="Waterman M.S."/>
            <person name="Eichler E.E."/>
            <person name="Adams M.D."/>
            <person name="Hunkapiller M.W."/>
            <person name="Myers E.W."/>
            <person name="Venter J.C."/>
        </authorList>
    </citation>
    <scope>NUCLEOTIDE SEQUENCE [LARGE SCALE GENOMIC DNA]</scope>
</reference>
<reference key="4">
    <citation type="journal article" date="2004" name="Genome Res.">
        <title>The status, quality, and expansion of the NIH full-length cDNA project: the Mammalian Gene Collection (MGC).</title>
        <authorList>
            <consortium name="The MGC Project Team"/>
        </authorList>
    </citation>
    <scope>NUCLEOTIDE SEQUENCE [LARGE SCALE MRNA] (ISOFORMS 3 AND 4)</scope>
    <source>
        <tissue>Brain</tissue>
        <tissue>Medulla oblongata</tissue>
    </source>
</reference>
<feature type="chain" id="PRO_0000089794" description="UPF0728 protein C10orf53">
    <location>
        <begin position="1"/>
        <end position="93"/>
    </location>
</feature>
<feature type="splice variant" id="VSP_036509" description="In isoform 2." evidence="1">
    <original>GDGKLDPLCEKARIAVLNAY</original>
    <variation>KPFGDASSQQFASSEESLNF</variation>
    <location>
        <begin position="74"/>
        <end position="93"/>
    </location>
</feature>
<feature type="splice variant" id="VSP_036867" description="In isoform 3." evidence="2">
    <original>GDGKLDPLCEKARIAVLNAY</original>
    <variation>KLTPSSDKRTTSSSRLTFHQLSSPCGMKVSPLQQFPQKTQDLTCIVLAQIGSCIHFQTNLCDLGWPGLDHMLISGLEKRGTQPY</variation>
    <location>
        <begin position="74"/>
        <end position="93"/>
    </location>
</feature>
<feature type="splice variant" id="VSP_046396" description="In isoform 4." evidence="2">
    <original>GDGKLDPLCEKARIAVLNAY</original>
    <variation>KLTPSSDKRTTSSSRLTFHQLSSPCRMKVSPLQQFPQKTQDLTCTVLAQIGSCIHFQTNLCDLGWPGLDHMLISGLEKRGTQPY</variation>
    <location>
        <begin position="74"/>
        <end position="93"/>
    </location>
</feature>
<feature type="sequence conflict" description="In Ref. 4; BI825648." evidence="3" ref="4">
    <original>R</original>
    <variation>G</variation>
    <location sequence="Q8N6V4-4">
        <position position="99"/>
    </location>
</feature>